<comment type="function">
    <text evidence="1">ATP-dependent serine protease that mediates the selective degradation of mutant and abnormal proteins as well as certain short-lived regulatory proteins. Required for cellular homeostasis and for survival from DNA damage and developmental changes induced by stress. Degrades polypeptides processively to yield small peptide fragments that are 5 to 10 amino acids long. Binds to DNA in a double-stranded, site-specific manner.</text>
</comment>
<comment type="catalytic activity">
    <reaction evidence="1">
        <text>Hydrolysis of proteins in presence of ATP.</text>
        <dbReference type="EC" id="3.4.21.53"/>
    </reaction>
</comment>
<comment type="subunit">
    <text evidence="1">Homohexamer. Organized in a ring with a central cavity.</text>
</comment>
<comment type="subcellular location">
    <subcellularLocation>
        <location evidence="1">Cytoplasm</location>
    </subcellularLocation>
</comment>
<comment type="induction">
    <text evidence="1">By heat shock.</text>
</comment>
<comment type="similarity">
    <text evidence="1">Belongs to the peptidase S16 family.</text>
</comment>
<dbReference type="EC" id="3.4.21.53" evidence="1"/>
<dbReference type="EMBL" id="AE002160">
    <property type="protein sequence ID" value="AAF39454.1"/>
    <property type="molecule type" value="Genomic_DNA"/>
</dbReference>
<dbReference type="PIR" id="E81681">
    <property type="entry name" value="E81681"/>
</dbReference>
<dbReference type="RefSeq" id="WP_010231044.1">
    <property type="nucleotide sequence ID" value="NZ_CP027217.1"/>
</dbReference>
<dbReference type="SMR" id="Q9PK50"/>
<dbReference type="GeneID" id="1245983"/>
<dbReference type="KEGG" id="cmu:TC_0623"/>
<dbReference type="eggNOG" id="COG0466">
    <property type="taxonomic scope" value="Bacteria"/>
</dbReference>
<dbReference type="HOGENOM" id="CLU_004109_4_3_0"/>
<dbReference type="OrthoDB" id="9803599at2"/>
<dbReference type="Proteomes" id="UP000000800">
    <property type="component" value="Chromosome"/>
</dbReference>
<dbReference type="GO" id="GO:0005737">
    <property type="term" value="C:cytoplasm"/>
    <property type="evidence" value="ECO:0007669"/>
    <property type="project" value="UniProtKB-SubCell"/>
</dbReference>
<dbReference type="GO" id="GO:0005524">
    <property type="term" value="F:ATP binding"/>
    <property type="evidence" value="ECO:0007669"/>
    <property type="project" value="UniProtKB-UniRule"/>
</dbReference>
<dbReference type="GO" id="GO:0016887">
    <property type="term" value="F:ATP hydrolysis activity"/>
    <property type="evidence" value="ECO:0007669"/>
    <property type="project" value="UniProtKB-UniRule"/>
</dbReference>
<dbReference type="GO" id="GO:0004176">
    <property type="term" value="F:ATP-dependent peptidase activity"/>
    <property type="evidence" value="ECO:0007669"/>
    <property type="project" value="UniProtKB-UniRule"/>
</dbReference>
<dbReference type="GO" id="GO:0043565">
    <property type="term" value="F:sequence-specific DNA binding"/>
    <property type="evidence" value="ECO:0007669"/>
    <property type="project" value="UniProtKB-UniRule"/>
</dbReference>
<dbReference type="GO" id="GO:0004252">
    <property type="term" value="F:serine-type endopeptidase activity"/>
    <property type="evidence" value="ECO:0007669"/>
    <property type="project" value="UniProtKB-UniRule"/>
</dbReference>
<dbReference type="GO" id="GO:0034605">
    <property type="term" value="P:cellular response to heat"/>
    <property type="evidence" value="ECO:0007669"/>
    <property type="project" value="UniProtKB-UniRule"/>
</dbReference>
<dbReference type="GO" id="GO:0006515">
    <property type="term" value="P:protein quality control for misfolded or incompletely synthesized proteins"/>
    <property type="evidence" value="ECO:0007669"/>
    <property type="project" value="UniProtKB-UniRule"/>
</dbReference>
<dbReference type="CDD" id="cd19500">
    <property type="entry name" value="RecA-like_Lon"/>
    <property type="match status" value="1"/>
</dbReference>
<dbReference type="FunFam" id="1.10.8.60:FF:000171">
    <property type="entry name" value="Lon protease"/>
    <property type="match status" value="1"/>
</dbReference>
<dbReference type="FunFam" id="3.40.50.300:FF:000021">
    <property type="entry name" value="Lon protease homolog"/>
    <property type="match status" value="1"/>
</dbReference>
<dbReference type="FunFam" id="1.20.5.5270:FF:000001">
    <property type="entry name" value="Lon protease homolog, mitochondrial"/>
    <property type="match status" value="1"/>
</dbReference>
<dbReference type="FunFam" id="1.20.58.1480:FF:000002">
    <property type="entry name" value="Lon protease homolog, mitochondrial"/>
    <property type="match status" value="1"/>
</dbReference>
<dbReference type="FunFam" id="3.30.230.10:FF:000015">
    <property type="entry name" value="Lon protease homolog, mitochondrial"/>
    <property type="match status" value="1"/>
</dbReference>
<dbReference type="Gene3D" id="1.10.8.60">
    <property type="match status" value="1"/>
</dbReference>
<dbReference type="Gene3D" id="1.20.5.5270">
    <property type="match status" value="1"/>
</dbReference>
<dbReference type="Gene3D" id="1.20.58.1480">
    <property type="match status" value="1"/>
</dbReference>
<dbReference type="Gene3D" id="3.30.230.10">
    <property type="match status" value="1"/>
</dbReference>
<dbReference type="Gene3D" id="2.30.130.40">
    <property type="entry name" value="LON domain-like"/>
    <property type="match status" value="1"/>
</dbReference>
<dbReference type="Gene3D" id="3.40.50.300">
    <property type="entry name" value="P-loop containing nucleotide triphosphate hydrolases"/>
    <property type="match status" value="1"/>
</dbReference>
<dbReference type="HAMAP" id="MF_01973">
    <property type="entry name" value="lon_bact"/>
    <property type="match status" value="1"/>
</dbReference>
<dbReference type="InterPro" id="IPR003593">
    <property type="entry name" value="AAA+_ATPase"/>
</dbReference>
<dbReference type="InterPro" id="IPR003959">
    <property type="entry name" value="ATPase_AAA_core"/>
</dbReference>
<dbReference type="InterPro" id="IPR027543">
    <property type="entry name" value="Lon_bac"/>
</dbReference>
<dbReference type="InterPro" id="IPR004815">
    <property type="entry name" value="Lon_bac/euk-typ"/>
</dbReference>
<dbReference type="InterPro" id="IPR054594">
    <property type="entry name" value="Lon_lid"/>
</dbReference>
<dbReference type="InterPro" id="IPR008269">
    <property type="entry name" value="Lon_proteolytic"/>
</dbReference>
<dbReference type="InterPro" id="IPR027065">
    <property type="entry name" value="Lon_Prtase"/>
</dbReference>
<dbReference type="InterPro" id="IPR003111">
    <property type="entry name" value="Lon_prtase_N"/>
</dbReference>
<dbReference type="InterPro" id="IPR046336">
    <property type="entry name" value="Lon_prtase_N_sf"/>
</dbReference>
<dbReference type="InterPro" id="IPR027417">
    <property type="entry name" value="P-loop_NTPase"/>
</dbReference>
<dbReference type="InterPro" id="IPR008268">
    <property type="entry name" value="Peptidase_S16_AS"/>
</dbReference>
<dbReference type="InterPro" id="IPR015947">
    <property type="entry name" value="PUA-like_sf"/>
</dbReference>
<dbReference type="InterPro" id="IPR020568">
    <property type="entry name" value="Ribosomal_Su5_D2-typ_SF"/>
</dbReference>
<dbReference type="InterPro" id="IPR014721">
    <property type="entry name" value="Ribsml_uS5_D2-typ_fold_subgr"/>
</dbReference>
<dbReference type="NCBIfam" id="TIGR00763">
    <property type="entry name" value="lon"/>
    <property type="match status" value="1"/>
</dbReference>
<dbReference type="PANTHER" id="PTHR43718">
    <property type="entry name" value="LON PROTEASE"/>
    <property type="match status" value="1"/>
</dbReference>
<dbReference type="PANTHER" id="PTHR43718:SF2">
    <property type="entry name" value="LON PROTEASE HOMOLOG, MITOCHONDRIAL"/>
    <property type="match status" value="1"/>
</dbReference>
<dbReference type="Pfam" id="PF00004">
    <property type="entry name" value="AAA"/>
    <property type="match status" value="1"/>
</dbReference>
<dbReference type="Pfam" id="PF05362">
    <property type="entry name" value="Lon_C"/>
    <property type="match status" value="1"/>
</dbReference>
<dbReference type="Pfam" id="PF22667">
    <property type="entry name" value="Lon_lid"/>
    <property type="match status" value="1"/>
</dbReference>
<dbReference type="Pfam" id="PF02190">
    <property type="entry name" value="LON_substr_bdg"/>
    <property type="match status" value="1"/>
</dbReference>
<dbReference type="PIRSF" id="PIRSF001174">
    <property type="entry name" value="Lon_proteas"/>
    <property type="match status" value="1"/>
</dbReference>
<dbReference type="PRINTS" id="PR00830">
    <property type="entry name" value="ENDOLAPTASE"/>
</dbReference>
<dbReference type="SMART" id="SM00382">
    <property type="entry name" value="AAA"/>
    <property type="match status" value="1"/>
</dbReference>
<dbReference type="SMART" id="SM00464">
    <property type="entry name" value="LON"/>
    <property type="match status" value="1"/>
</dbReference>
<dbReference type="SUPFAM" id="SSF52540">
    <property type="entry name" value="P-loop containing nucleoside triphosphate hydrolases"/>
    <property type="match status" value="1"/>
</dbReference>
<dbReference type="SUPFAM" id="SSF88697">
    <property type="entry name" value="PUA domain-like"/>
    <property type="match status" value="1"/>
</dbReference>
<dbReference type="SUPFAM" id="SSF54211">
    <property type="entry name" value="Ribosomal protein S5 domain 2-like"/>
    <property type="match status" value="1"/>
</dbReference>
<dbReference type="PROSITE" id="PS51787">
    <property type="entry name" value="LON_N"/>
    <property type="match status" value="1"/>
</dbReference>
<dbReference type="PROSITE" id="PS51786">
    <property type="entry name" value="LON_PROTEOLYTIC"/>
    <property type="match status" value="1"/>
</dbReference>
<dbReference type="PROSITE" id="PS01046">
    <property type="entry name" value="LON_SER"/>
    <property type="match status" value="1"/>
</dbReference>
<protein>
    <recommendedName>
        <fullName evidence="1">Lon protease</fullName>
        <ecNumber evidence="1">3.4.21.53</ecNumber>
    </recommendedName>
    <alternativeName>
        <fullName evidence="1">ATP-dependent protease La</fullName>
    </alternativeName>
</protein>
<accession>Q9PK50</accession>
<organism>
    <name type="scientific">Chlamydia muridarum (strain MoPn / Nigg)</name>
    <dbReference type="NCBI Taxonomy" id="243161"/>
    <lineage>
        <taxon>Bacteria</taxon>
        <taxon>Pseudomonadati</taxon>
        <taxon>Chlamydiota</taxon>
        <taxon>Chlamydiia</taxon>
        <taxon>Chlamydiales</taxon>
        <taxon>Chlamydiaceae</taxon>
        <taxon>Chlamydia/Chlamydophila group</taxon>
        <taxon>Chlamydia</taxon>
    </lineage>
</organism>
<feature type="chain" id="PRO_0000076130" description="Lon protease">
    <location>
        <begin position="1"/>
        <end position="819"/>
    </location>
</feature>
<feature type="domain" description="Lon N-terminal" evidence="3">
    <location>
        <begin position="42"/>
        <end position="239"/>
    </location>
</feature>
<feature type="domain" description="Lon proteolytic" evidence="2">
    <location>
        <begin position="634"/>
        <end position="818"/>
    </location>
</feature>
<feature type="region of interest" description="Disordered" evidence="4">
    <location>
        <begin position="1"/>
        <end position="41"/>
    </location>
</feature>
<feature type="compositionally biased region" description="Polar residues" evidence="4">
    <location>
        <begin position="1"/>
        <end position="14"/>
    </location>
</feature>
<feature type="compositionally biased region" description="Basic and acidic residues" evidence="4">
    <location>
        <begin position="18"/>
        <end position="38"/>
    </location>
</feature>
<feature type="active site" evidence="1">
    <location>
        <position position="724"/>
    </location>
</feature>
<feature type="active site" evidence="1">
    <location>
        <position position="767"/>
    </location>
</feature>
<feature type="binding site" evidence="1">
    <location>
        <begin position="392"/>
        <end position="399"/>
    </location>
    <ligand>
        <name>ATP</name>
        <dbReference type="ChEBI" id="CHEBI:30616"/>
    </ligand>
</feature>
<evidence type="ECO:0000255" key="1">
    <source>
        <dbReference type="HAMAP-Rule" id="MF_01973"/>
    </source>
</evidence>
<evidence type="ECO:0000255" key="2">
    <source>
        <dbReference type="PROSITE-ProRule" id="PRU01122"/>
    </source>
</evidence>
<evidence type="ECO:0000255" key="3">
    <source>
        <dbReference type="PROSITE-ProRule" id="PRU01123"/>
    </source>
</evidence>
<evidence type="ECO:0000256" key="4">
    <source>
        <dbReference type="SAM" id="MobiDB-lite"/>
    </source>
</evidence>
<keyword id="KW-0067">ATP-binding</keyword>
<keyword id="KW-0963">Cytoplasm</keyword>
<keyword id="KW-0378">Hydrolase</keyword>
<keyword id="KW-0547">Nucleotide-binding</keyword>
<keyword id="KW-0645">Protease</keyword>
<keyword id="KW-0720">Serine protease</keyword>
<keyword id="KW-0346">Stress response</keyword>
<proteinExistence type="inferred from homology"/>
<gene>
    <name evidence="1" type="primary">lon</name>
    <name type="ordered locus">TC_0623</name>
</gene>
<sequence>MNSTNNTDSQNLDPNASEVEKLLDESAEAEEKTDDHTPPSELFILPLNKRPFFPGMAAPLLIEAGPHYEVLTLLAKSSQKHIGLVLTKKEDANTLKIGFNQLHRVGVSARILRIMPIEGGSAQVLLSIEDRIRIVKPVQDKYLKAKVAYHKENKELTEELKAYSISIVSIIKDLLKLNPLFKEELQIFLGHSDFTEPGKLADFSVALTTATREELQEVLETTDMHDRIDKALVLLKKELDLSRLQSSINQKIEATITKSQKEFFLKEQLKTIKKELGLEKDDHAVDLEKFMERLNKRDVPQYAMDVIQDEMDKLQTLETSSAEYAVCRNYLDWLTIVPWGIQTKEYHDLKKAESILNKDHYGLEDIKQRILELISVGKLANGMKGSIICLVGPPGVGKTSIGRSIAKVLHRKFFRFSVGGMRDEAEIKGHRRTYIGAMPGKLVQALKQSAIMNPVIMIDEVDKIGSSYHGDPASALLEVLDPEQNKDFLDHYLDVRVDLSNVLFILTANVLDSIPDPLLDRMEVLRLSGYILEEKLQIATKYLVPRARKEMGLSAQNVSFQPEALKHMINNYAREAGVRTLNENIKKVLRKVALKIVQNQEKNPSKKSRFTITPKNLQDYLGKPIFSSDRFYEKTPVGVATGLAWTSLGGATLYIESVQVPSSSGKADMHLTGQAGDVMKESSQIAWTYLHSALERYAPGRPFFEKSQVHIHIPEGATPKDGPSAGITMVTSLLSLLLDVPVLNNLGMTGELTLTGRVLGIGGIREKLIAARRSKLNVLIFPEDNRRDYDELPAYLKKGLKVHFVTHYDDVFKIAFPGV</sequence>
<name>LON_CHLMU</name>
<reference key="1">
    <citation type="journal article" date="2000" name="Nucleic Acids Res.">
        <title>Genome sequences of Chlamydia trachomatis MoPn and Chlamydia pneumoniae AR39.</title>
        <authorList>
            <person name="Read T.D."/>
            <person name="Brunham R.C."/>
            <person name="Shen C."/>
            <person name="Gill S.R."/>
            <person name="Heidelberg J.F."/>
            <person name="White O."/>
            <person name="Hickey E.K."/>
            <person name="Peterson J.D."/>
            <person name="Utterback T.R."/>
            <person name="Berry K.J."/>
            <person name="Bass S."/>
            <person name="Linher K.D."/>
            <person name="Weidman J.F."/>
            <person name="Khouri H.M."/>
            <person name="Craven B."/>
            <person name="Bowman C."/>
            <person name="Dodson R.J."/>
            <person name="Gwinn M.L."/>
            <person name="Nelson W.C."/>
            <person name="DeBoy R.T."/>
            <person name="Kolonay J.F."/>
            <person name="McClarty G."/>
            <person name="Salzberg S.L."/>
            <person name="Eisen J.A."/>
            <person name="Fraser C.M."/>
        </authorList>
    </citation>
    <scope>NUCLEOTIDE SEQUENCE [LARGE SCALE GENOMIC DNA]</scope>
    <source>
        <strain>MoPn / Nigg</strain>
    </source>
</reference>